<comment type="function">
    <text>Catalyzes the synthesis of mevalonate. The specific precursor of all isoprenoid compounds present in plants.</text>
</comment>
<comment type="catalytic activity">
    <reaction evidence="3">
        <text>(R)-mevalonate + 2 NADP(+) + CoA = (3S)-3-hydroxy-3-methylglutaryl-CoA + 2 NADPH + 2 H(+)</text>
        <dbReference type="Rhea" id="RHEA:15989"/>
        <dbReference type="ChEBI" id="CHEBI:15378"/>
        <dbReference type="ChEBI" id="CHEBI:36464"/>
        <dbReference type="ChEBI" id="CHEBI:43074"/>
        <dbReference type="ChEBI" id="CHEBI:57287"/>
        <dbReference type="ChEBI" id="CHEBI:57783"/>
        <dbReference type="ChEBI" id="CHEBI:58349"/>
        <dbReference type="EC" id="1.1.1.34"/>
    </reaction>
</comment>
<comment type="pathway">
    <text>Metabolic intermediate biosynthesis; (R)-mevalonate biosynthesis; (R)-mevalonate from acetyl-CoA: step 3/3.</text>
</comment>
<comment type="subcellular location">
    <subcellularLocation>
        <location>Endoplasmic reticulum membrane</location>
        <topology>Multi-pass membrane protein</topology>
    </subcellularLocation>
    <subcellularLocation>
        <location>Mitochondrion membrane</location>
        <topology>Multi-pass membrane protein</topology>
    </subcellularLocation>
    <subcellularLocation>
        <location>Plastid membrane</location>
        <topology>Multi-pass membrane protein</topology>
    </subcellularLocation>
</comment>
<comment type="similarity">
    <text evidence="5">Belongs to the HMG-CoA reductase family.</text>
</comment>
<feature type="chain" id="PRO_0000114440" description="3-hydroxy-3-methylglutaryl-coenzyme A reductase 1">
    <location>
        <begin position="1"/>
        <end position="575"/>
    </location>
</feature>
<feature type="transmembrane region" description="Helical" evidence="2">
    <location>
        <begin position="29"/>
        <end position="49"/>
    </location>
</feature>
<feature type="transmembrane region" description="Helical" evidence="2">
    <location>
        <begin position="73"/>
        <end position="93"/>
    </location>
</feature>
<feature type="transmembrane region" description="Helical" evidence="2">
    <location>
        <begin position="531"/>
        <end position="551"/>
    </location>
</feature>
<feature type="region of interest" description="Disordered" evidence="4">
    <location>
        <begin position="1"/>
        <end position="25"/>
    </location>
</feature>
<feature type="region of interest" description="Linker" evidence="1">
    <location>
        <begin position="97"/>
        <end position="160"/>
    </location>
</feature>
<feature type="region of interest" description="Catalytic" evidence="1">
    <location>
        <begin position="161"/>
        <end position="575"/>
    </location>
</feature>
<feature type="compositionally biased region" description="Basic residues" evidence="4">
    <location>
        <begin position="1"/>
        <end position="13"/>
    </location>
</feature>
<feature type="active site" description="Charge relay system" evidence="1">
    <location>
        <position position="254"/>
    </location>
</feature>
<feature type="active site" description="Charge relay system" evidence="1">
    <location>
        <position position="386"/>
    </location>
</feature>
<feature type="active site" description="Charge relay system" evidence="1">
    <location>
        <position position="462"/>
    </location>
</feature>
<feature type="active site" description="Proton donor" evidence="3">
    <location>
        <position position="560"/>
    </location>
</feature>
<feature type="glycosylation site" description="N-linked (GlcNAc...) asparagine" evidence="2">
    <location>
        <position position="132"/>
    </location>
</feature>
<feature type="glycosylation site" description="N-linked (GlcNAc...) asparagine" evidence="2">
    <location>
        <position position="318"/>
    </location>
</feature>
<feature type="glycosylation site" description="N-linked (GlcNAc...) asparagine" evidence="2">
    <location>
        <position position="564"/>
    </location>
</feature>
<accession>P29057</accession>
<proteinExistence type="evidence at transcript level"/>
<keyword id="KW-0256">Endoplasmic reticulum</keyword>
<keyword id="KW-0325">Glycoprotein</keyword>
<keyword id="KW-0414">Isoprene biosynthesis</keyword>
<keyword id="KW-0472">Membrane</keyword>
<keyword id="KW-0496">Mitochondrion</keyword>
<keyword id="KW-0521">NADP</keyword>
<keyword id="KW-0560">Oxidoreductase</keyword>
<keyword id="KW-0934">Plastid</keyword>
<keyword id="KW-0812">Transmembrane</keyword>
<keyword id="KW-1133">Transmembrane helix</keyword>
<organism>
    <name type="scientific">Hevea brasiliensis</name>
    <name type="common">Para rubber tree</name>
    <name type="synonym">Siphonia brasiliensis</name>
    <dbReference type="NCBI Taxonomy" id="3981"/>
    <lineage>
        <taxon>Eukaryota</taxon>
        <taxon>Viridiplantae</taxon>
        <taxon>Streptophyta</taxon>
        <taxon>Embryophyta</taxon>
        <taxon>Tracheophyta</taxon>
        <taxon>Spermatophyta</taxon>
        <taxon>Magnoliopsida</taxon>
        <taxon>eudicotyledons</taxon>
        <taxon>Gunneridae</taxon>
        <taxon>Pentapetalae</taxon>
        <taxon>rosids</taxon>
        <taxon>fabids</taxon>
        <taxon>Malpighiales</taxon>
        <taxon>Euphorbiaceae</taxon>
        <taxon>Crotonoideae</taxon>
        <taxon>Micrandreae</taxon>
        <taxon>Hevea</taxon>
    </lineage>
</organism>
<reference key="1">
    <citation type="journal article" date="1991" name="Plant Mol. Biol.">
        <title>Characterization of cDNA and genomic clones encoding 3-hydroxy-3-methylglutaryl-coenzyme A reductase from Hevea brasiliensis.</title>
        <authorList>
            <person name="Chye M.L."/>
            <person name="Kush A."/>
            <person name="Tan C.T."/>
            <person name="Chua N.H."/>
        </authorList>
    </citation>
    <scope>NUCLEOTIDE SEQUENCE [GENOMIC DNA / MRNA]</scope>
    <source>
        <strain>cv. RRIM 600</strain>
        <tissue>Leaf</tissue>
    </source>
</reference>
<reference key="2">
    <citation type="submission" date="2003-07" db="EMBL/GenBank/DDBJ databases">
        <title>Cloning and nucleotide sequence analysis of HMGR1 gene in Hevea brasiliensis.</title>
        <authorList>
            <person name="Venkatachalam P."/>
            <person name="Priya P."/>
            <person name="Thulaseedharan A."/>
        </authorList>
    </citation>
    <scope>NUCLEOTIDE SEQUENCE</scope>
</reference>
<sequence>MDTTGRLHHRKHATPVEDRSPTTPKASDALPLPLYLTNAVFFTLFFSVAYYLLHRWRDKIRNSTPLHIVTLSEIVAIVSLIASFIYLLGFFGIDFVQSFIARASHDVWDLEDTDPNYLIDEDHRLVTCPPANISTKTTIIAAPTKLPTSEPLIAPLVSEEDEMIVNSVVDGKIPSYSLESKLGDCKRAAAIRREALQRMTRRSLEGLPVEGFDYESILGQCCEMPVGYVQIPVGIAGPLLLNGREYSVPMATTEGCLVASTNRGCKAIYLSGGATSVLLKDGMTRAPVVRFASATRAAELKFFLEDPDNFDTLAVVFNKSSRFARLQGIKCSIAGKNLYIRFSCSTGDAMGMNMVSKGVQNVLEFLQSDFSDMDVIGISGNFCSDKKPAAVNWIEGRGKSVVCEAIIKEEVVKKVLKTNVASLVELNMLKNLAGSAVAGALGGFNAHAGNIVSAIFIATGQDPAQNVESSHCITMMEAVNDGKDLHISVTMPSIEVGTVGGGTQLASQSACLNLLGVKGANKESPGSNSRLLAAIVAGSVLAGELSLMSAIAAGQLVKSHMKYNRSSKDMSKAAS</sequence>
<gene>
    <name type="primary">HMGR1</name>
</gene>
<name>HMDH1_HEVBR</name>
<protein>
    <recommendedName>
        <fullName>3-hydroxy-3-methylglutaryl-coenzyme A reductase 1</fullName>
        <shortName>HMG-CoA reductase 1</shortName>
        <ecNumber>1.1.1.34</ecNumber>
    </recommendedName>
</protein>
<evidence type="ECO:0000250" key="1"/>
<evidence type="ECO:0000255" key="2"/>
<evidence type="ECO:0000255" key="3">
    <source>
        <dbReference type="PROSITE-ProRule" id="PRU10003"/>
    </source>
</evidence>
<evidence type="ECO:0000256" key="4">
    <source>
        <dbReference type="SAM" id="MobiDB-lite"/>
    </source>
</evidence>
<evidence type="ECO:0000305" key="5"/>
<dbReference type="EC" id="1.1.1.34"/>
<dbReference type="EMBL" id="X54657">
    <property type="protein sequence ID" value="CAA38467.1"/>
    <property type="molecule type" value="Genomic_DNA"/>
</dbReference>
<dbReference type="EMBL" id="X54659">
    <property type="protein sequence ID" value="CAA38469.1"/>
    <property type="molecule type" value="mRNA"/>
</dbReference>
<dbReference type="EMBL" id="AY352338">
    <property type="protein sequence ID" value="AAQ63055.1"/>
    <property type="molecule type" value="Genomic_DNA"/>
</dbReference>
<dbReference type="PIR" id="S14955">
    <property type="entry name" value="S14955"/>
</dbReference>
<dbReference type="SMR" id="P29057"/>
<dbReference type="GlyCosmos" id="P29057">
    <property type="glycosylation" value="3 sites, No reported glycans"/>
</dbReference>
<dbReference type="OrthoDB" id="310654at2759"/>
<dbReference type="UniPathway" id="UPA00058">
    <property type="reaction ID" value="UER00103"/>
</dbReference>
<dbReference type="GO" id="GO:0005789">
    <property type="term" value="C:endoplasmic reticulum membrane"/>
    <property type="evidence" value="ECO:0007669"/>
    <property type="project" value="UniProtKB-SubCell"/>
</dbReference>
<dbReference type="GO" id="GO:0031966">
    <property type="term" value="C:mitochondrial membrane"/>
    <property type="evidence" value="ECO:0007669"/>
    <property type="project" value="UniProtKB-SubCell"/>
</dbReference>
<dbReference type="GO" id="GO:0005778">
    <property type="term" value="C:peroxisomal membrane"/>
    <property type="evidence" value="ECO:0007669"/>
    <property type="project" value="TreeGrafter"/>
</dbReference>
<dbReference type="GO" id="GO:0042170">
    <property type="term" value="C:plastid membrane"/>
    <property type="evidence" value="ECO:0007669"/>
    <property type="project" value="UniProtKB-SubCell"/>
</dbReference>
<dbReference type="GO" id="GO:0004420">
    <property type="term" value="F:hydroxymethylglutaryl-CoA reductase (NADPH) activity"/>
    <property type="evidence" value="ECO:0007669"/>
    <property type="project" value="UniProtKB-EC"/>
</dbReference>
<dbReference type="GO" id="GO:0015936">
    <property type="term" value="P:coenzyme A metabolic process"/>
    <property type="evidence" value="ECO:0007669"/>
    <property type="project" value="InterPro"/>
</dbReference>
<dbReference type="GO" id="GO:0008299">
    <property type="term" value="P:isoprenoid biosynthetic process"/>
    <property type="evidence" value="ECO:0007669"/>
    <property type="project" value="UniProtKB-KW"/>
</dbReference>
<dbReference type="GO" id="GO:0016126">
    <property type="term" value="P:sterol biosynthetic process"/>
    <property type="evidence" value="ECO:0007669"/>
    <property type="project" value="TreeGrafter"/>
</dbReference>
<dbReference type="CDD" id="cd00643">
    <property type="entry name" value="HMG-CoA_reductase_classI"/>
    <property type="match status" value="1"/>
</dbReference>
<dbReference type="FunFam" id="1.10.3270.10:FF:000002">
    <property type="entry name" value="3-hydroxy-3-methylglutaryl coenzyme A reductase"/>
    <property type="match status" value="1"/>
</dbReference>
<dbReference type="FunFam" id="3.30.70.420:FF:000001">
    <property type="entry name" value="3-hydroxy-3-methylglutaryl coenzyme A reductase"/>
    <property type="match status" value="1"/>
</dbReference>
<dbReference type="FunFam" id="3.90.770.10:FF:000001">
    <property type="entry name" value="3-hydroxy-3-methylglutaryl coenzyme A reductase"/>
    <property type="match status" value="1"/>
</dbReference>
<dbReference type="Gene3D" id="3.90.770.10">
    <property type="entry name" value="3-hydroxy-3-methylglutaryl-coenzyme A Reductase, Chain A, domain 2"/>
    <property type="match status" value="1"/>
</dbReference>
<dbReference type="Gene3D" id="1.10.3270.10">
    <property type="entry name" value="HMGR, N-terminal domain"/>
    <property type="match status" value="1"/>
</dbReference>
<dbReference type="Gene3D" id="3.30.70.420">
    <property type="entry name" value="Hydroxymethylglutaryl-CoA reductase, class I/II, NAD/NADP-binding domain"/>
    <property type="match status" value="1"/>
</dbReference>
<dbReference type="InterPro" id="IPR002202">
    <property type="entry name" value="HMG_CoA_Rdtase"/>
</dbReference>
<dbReference type="InterPro" id="IPR023074">
    <property type="entry name" value="HMG_CoA_Rdtase_cat_sf"/>
</dbReference>
<dbReference type="InterPro" id="IPR023076">
    <property type="entry name" value="HMG_CoA_Rdtase_CS"/>
</dbReference>
<dbReference type="InterPro" id="IPR004554">
    <property type="entry name" value="HMG_CoA_Rdtase_eu_arc"/>
</dbReference>
<dbReference type="InterPro" id="IPR023282">
    <property type="entry name" value="HMG_CoA_Rdtase_N"/>
</dbReference>
<dbReference type="InterPro" id="IPR009023">
    <property type="entry name" value="HMG_CoA_Rdtase_NAD(P)-bd_sf"/>
</dbReference>
<dbReference type="InterPro" id="IPR009029">
    <property type="entry name" value="HMG_CoA_Rdtase_sub-bd_dom_sf"/>
</dbReference>
<dbReference type="NCBIfam" id="TIGR00533">
    <property type="entry name" value="HMG_CoA_R_NADP"/>
    <property type="match status" value="1"/>
</dbReference>
<dbReference type="PANTHER" id="PTHR10572">
    <property type="entry name" value="3-HYDROXY-3-METHYLGLUTARYL-COENZYME A REDUCTASE"/>
    <property type="match status" value="1"/>
</dbReference>
<dbReference type="PANTHER" id="PTHR10572:SF24">
    <property type="entry name" value="3-HYDROXY-3-METHYLGLUTARYL-COENZYME A REDUCTASE"/>
    <property type="match status" value="1"/>
</dbReference>
<dbReference type="Pfam" id="PF00368">
    <property type="entry name" value="HMG-CoA_red"/>
    <property type="match status" value="1"/>
</dbReference>
<dbReference type="PRINTS" id="PR00071">
    <property type="entry name" value="HMGCOARDTASE"/>
</dbReference>
<dbReference type="SUPFAM" id="SSF55035">
    <property type="entry name" value="NAD-binding domain of HMG-CoA reductase"/>
    <property type="match status" value="1"/>
</dbReference>
<dbReference type="SUPFAM" id="SSF56542">
    <property type="entry name" value="Substrate-binding domain of HMG-CoA reductase"/>
    <property type="match status" value="1"/>
</dbReference>
<dbReference type="PROSITE" id="PS00066">
    <property type="entry name" value="HMG_COA_REDUCTASE_1"/>
    <property type="match status" value="1"/>
</dbReference>
<dbReference type="PROSITE" id="PS00318">
    <property type="entry name" value="HMG_COA_REDUCTASE_2"/>
    <property type="match status" value="1"/>
</dbReference>
<dbReference type="PROSITE" id="PS01192">
    <property type="entry name" value="HMG_COA_REDUCTASE_3"/>
    <property type="match status" value="1"/>
</dbReference>
<dbReference type="PROSITE" id="PS50065">
    <property type="entry name" value="HMG_COA_REDUCTASE_4"/>
    <property type="match status" value="1"/>
</dbReference>